<organismHost>
    <name type="scientific">Homo sapiens</name>
    <name type="common">Human</name>
    <dbReference type="NCBI Taxonomy" id="9606"/>
</organismHost>
<organismHost>
    <name type="scientific">Macaca fascicularis</name>
    <name type="common">Crab-eating macaque</name>
    <name type="synonym">Cynomolgus monkey</name>
    <dbReference type="NCBI Taxonomy" id="9541"/>
</organismHost>
<organismHost>
    <name type="scientific">Pteropodinae</name>
    <dbReference type="NCBI Taxonomy" id="77225"/>
</organismHost>
<organismHost>
    <name type="scientific">Sus scrofa</name>
    <name type="common">Pig</name>
    <dbReference type="NCBI Taxonomy" id="9823"/>
</organismHost>
<proteinExistence type="inferred from homology"/>
<name>L_EBORE</name>
<sequence>MATQHTQYPDARLSSPIVLDQCDLVTRACGLYSSYSLNPQLRQCKLPKHIYRLKFDTIVSKFLSDTPVATLPIDYLVPILLRSLTGHGDRPLTPTCNQFLDGIINYTLHDAAFLDYYLKATGAQDHLTNITTREKLKNEILNNDYVHQLFFWHDLSILARRGRLNRGNNRSTWFVHDEFIDILGYGDYIFWKIPLSLLPVTIDGVPHAATDWYQPTLFKESILGHSQILSVSTAEILIMCKDIITCRFNTSLIASIAKLEDVDVSDYPDPSDILKIYNAGDYVISILGSEGYKIIKYLEPLCLAKIQLCSKFTERKGRFLTQMHLSVINDLRELISNRRLKDYQQEKIRDFHKILLQLQLSPQQFCELFSVQKHWGHPILHSEKAIQKVKRHATILKALRPNVIFETYCVFKYNIAKHYFDSQGTWYSVISDRNLTPGLNSFIKRNHFPSLPMIKDLLWEFYHLNHPPLFSTKVISDLSIFIKDRATAVEQTCWDAVFEPNVLGYNPPNKFSTKRVPEQFLEQEDFSIESVLNYAQELHYLLPQNRNFSFSLKEKELNIGRTFGKLPYLTRNVQTLCEALLADGLAKAFPSNMMVVTEREQKESLLHQASWHHTSDDFGENATVRGSSFVTDLEKYNLAFRYEFTAPFIEYCNHCYGVRNVFNWMHYLIPQCYMHVSDYYNPPHNVNLSNREYPPEGPSSYRGHLGGIEGLQQKLWTSISCAQISLVEIKTGFKLRSAVMGDNQCITVLSVFPLETDPEEQEQSAEDNAARVAASLAKVTSACGIFLKPEETFVHSGFIYFGKKQYLNGVQLPQSLKTAARMAPLSDAIFDDLQGTLASIGTAFERAISETRHILPCRIVAAFHTYFAVRILQYHHLGFNKGIDLGQLSLSKPLDYGTITLTLAVPQVLGGLSFLNPEKCFYRNFGDPVTSGLFQLRVYLEMVNMKDLFYPLISKNPGNCSAIDFVLNPSGLNVPGSQDLTSFLRQIVRRSITLTARNKLINTLFHASADLEDEMVCKWLLSSNPVMSRFAADIFSRTPSGKRLQILGYLEGTRTLLASKIINNNSETPVLDKLRKITLQRWNLWFSYLDHCDQLLADALQKISCTVDLAQILREYTWSHILEGRPLIGATLPCMVEQFKVKWLRQYEPCPECLNKKGSNAYVSVAVKDQVVSAWPNTSRISWTIGSGVPYIGSRTEDKIGQPAIKPRCPSSALKEAIELASRLTWVTQGSSNSEQLIRPFLEARVNLSVSEVLQMTPSHYSGNIVHRYNDQYSPHSFMANRMSNTATRLIVSTNTLGEFSGGGQAARDSNIIFQNVINLAVALYDIRFRNTNTSDIRHNRAHLHLTECCTKEVPAQYLTYTSALNLDLSRYRDNELIYDSNPLRGGLNCNLTMDSPLVKGPRLNMIEDDLLRFPHLSGWELAKTVVQSIISDNSNSSTDPISSGETRSFTTHFLTYPQIGLLYSFGAVLCFYLGNTILWTKKLDYEQFLYYLHNQLHNLPHRALRVFKPTFKHASVMSRLMEIDSNFSIYIGGTSGDRGLSDAARLFLRTAIASFLQFLKSWIIDRQKAIPLWIVYPLEGQQPESINEFLHKIFGLLKQGPKNIPKEVSIQNDGHLDLAENNYVYNSKSTASNFFHASLAYWRSRKSRKTQDHNDFSRGDGTLTEPVCKFSSNHQSDEKYYNVTCGKSPKPQERKDFSQYRLSNNGQTMSNHRKKGKFHKWNPCKVLMESQRGTVLKEGDYFQNNTPPTDDVSSPHRLILPFFKLGNHNHAHDQDAQELINQNIKQYLHQLRSMLDTTIYCRFTGIVSSMHYKLDEVLLEYNSFDSAITLAEGEGSGALLLLQKYSTRLLFLNTLATEHSIESEVVSGFSTPRMLLPIMQKVHEGQVTVILNNSASQITDITSSMWLSNQKYNLPCQVEIITMDAETTENLNRSQLYRAVYNLILDHIDPQYLKVVVLKVFLSDIEGILWINDYLAPLFGAGYLIKPITSSARSSEWYLCLSNLISTNRRSAHQTHKACLGVIRDALQAQVQRGVYWLSHIAQYATKNLHCEYICLGFPPLEKVLYHRYNLVDTGLGPLSSVIRHLTNLQAEIRDLVLDYTLMRESRTQTYHFIKTAKGRITKLVNDFLKFSLIVQALKNNSSWYTELKKLPEVINVCNRFYHTHSCECQEKFFVQTLYLQRLRDAEIKLIERLTGLMRFYPEGLIYSNHT</sequence>
<feature type="chain" id="PRO_0000245047" description="RNA-directed RNA polymerase L">
    <location>
        <begin position="1"/>
        <end position="2212"/>
    </location>
</feature>
<feature type="domain" description="RdRp catalytic" evidence="4">
    <location>
        <begin position="625"/>
        <end position="809"/>
    </location>
</feature>
<feature type="domain" description="Mononegavirus-type SAM-dependent 2'-O-MTase" evidence="5">
    <location>
        <begin position="1803"/>
        <end position="2001"/>
    </location>
</feature>
<gene>
    <name type="primary">L</name>
</gene>
<accession>Q91DD4</accession>
<dbReference type="EC" id="2.7.7.48" evidence="3"/>
<dbReference type="EC" id="3.6.1.-" evidence="2"/>
<dbReference type="EC" id="2.7.7.88" evidence="2"/>
<dbReference type="EC" id="2.1.1.375" evidence="2"/>
<dbReference type="EMBL" id="AB050936">
    <property type="protein sequence ID" value="BAB69010.1"/>
    <property type="molecule type" value="Genomic_RNA"/>
</dbReference>
<dbReference type="SMR" id="Q91DD4"/>
<dbReference type="Proteomes" id="UP000002322">
    <property type="component" value="Genome"/>
</dbReference>
<dbReference type="GO" id="GO:0030430">
    <property type="term" value="C:host cell cytoplasm"/>
    <property type="evidence" value="ECO:0007669"/>
    <property type="project" value="UniProtKB-SubCell"/>
</dbReference>
<dbReference type="GO" id="GO:0044423">
    <property type="term" value="C:virion component"/>
    <property type="evidence" value="ECO:0007669"/>
    <property type="project" value="UniProtKB-KW"/>
</dbReference>
<dbReference type="GO" id="GO:0005524">
    <property type="term" value="F:ATP binding"/>
    <property type="evidence" value="ECO:0007669"/>
    <property type="project" value="UniProtKB-KW"/>
</dbReference>
<dbReference type="GO" id="GO:0003924">
    <property type="term" value="F:GTPase activity"/>
    <property type="evidence" value="ECO:0007669"/>
    <property type="project" value="RHEA"/>
</dbReference>
<dbReference type="GO" id="GO:0004482">
    <property type="term" value="F:mRNA 5'-cap (guanine-N7-)-methyltransferase activity"/>
    <property type="evidence" value="ECO:0007669"/>
    <property type="project" value="InterPro"/>
</dbReference>
<dbReference type="GO" id="GO:0003968">
    <property type="term" value="F:RNA-directed RNA polymerase activity"/>
    <property type="evidence" value="ECO:0007669"/>
    <property type="project" value="UniProtKB-KW"/>
</dbReference>
<dbReference type="GO" id="GO:0039689">
    <property type="term" value="P:negative stranded viral RNA replication"/>
    <property type="evidence" value="ECO:0000250"/>
    <property type="project" value="UniProtKB"/>
</dbReference>
<dbReference type="GO" id="GO:0039697">
    <property type="term" value="P:negative stranded viral RNA transcription"/>
    <property type="evidence" value="ECO:0000250"/>
    <property type="project" value="UniProtKB"/>
</dbReference>
<dbReference type="InterPro" id="IPR039736">
    <property type="entry name" value="L_poly_C"/>
</dbReference>
<dbReference type="InterPro" id="IPR026890">
    <property type="entry name" value="Mononeg_mRNAcap"/>
</dbReference>
<dbReference type="InterPro" id="IPR014023">
    <property type="entry name" value="Mononeg_RNA_pol_cat"/>
</dbReference>
<dbReference type="InterPro" id="IPR025786">
    <property type="entry name" value="Mononega_L_MeTrfase"/>
</dbReference>
<dbReference type="InterPro" id="IPR017235">
    <property type="entry name" value="RNA-dir_pol_L_filovirus"/>
</dbReference>
<dbReference type="NCBIfam" id="TIGR04198">
    <property type="entry name" value="paramyx_RNAcap"/>
    <property type="match status" value="1"/>
</dbReference>
<dbReference type="Pfam" id="PF14318">
    <property type="entry name" value="Mononeg_mRNAcap"/>
    <property type="match status" value="1"/>
</dbReference>
<dbReference type="Pfam" id="PF00946">
    <property type="entry name" value="Mononeg_RNA_pol"/>
    <property type="match status" value="1"/>
</dbReference>
<dbReference type="PIRSF" id="PIRSF037548">
    <property type="entry name" value="RNA_pol_Filoviridae"/>
    <property type="match status" value="1"/>
</dbReference>
<dbReference type="PROSITE" id="PS50526">
    <property type="entry name" value="RDRP_SSRNA_NEG_NONSEG"/>
    <property type="match status" value="1"/>
</dbReference>
<dbReference type="PROSITE" id="PS51590">
    <property type="entry name" value="SAM_MT_MNV_L"/>
    <property type="match status" value="1"/>
</dbReference>
<evidence type="ECO:0000250" key="1"/>
<evidence type="ECO:0000250" key="2">
    <source>
        <dbReference type="UniProtKB" id="P03523"/>
    </source>
</evidence>
<evidence type="ECO:0000250" key="3">
    <source>
        <dbReference type="UniProtKB" id="P28887"/>
    </source>
</evidence>
<evidence type="ECO:0000255" key="4">
    <source>
        <dbReference type="PROSITE-ProRule" id="PRU00539"/>
    </source>
</evidence>
<evidence type="ECO:0000255" key="5">
    <source>
        <dbReference type="PROSITE-ProRule" id="PRU00923"/>
    </source>
</evidence>
<evidence type="ECO:0000305" key="6"/>
<reference key="1">
    <citation type="journal article" date="2001" name="Arch. Virol.">
        <title>Genome structure of Ebola virus subtype Reston: differences among Ebola subtypes.</title>
        <authorList>
            <person name="Ikegami T."/>
            <person name="Calaor A.B."/>
            <person name="Miranda M.E."/>
            <person name="Niikura M."/>
            <person name="Saijo M."/>
            <person name="Kurane I."/>
            <person name="Yoshikawa Y."/>
            <person name="Morikawa S."/>
        </authorList>
    </citation>
    <scope>NUCLEOTIDE SEQUENCE [GENOMIC RNA]</scope>
</reference>
<comment type="function">
    <text evidence="2">RNA-directed RNA polymerase that catalyzes the transcription of viral mRNAs, their capping and polyadenylation. The template is composed of the viral RNA tightly encapsidated by the nucleoprotein (N). The viral polymerase binds to the genomic RNA at the 3' leader promoter, and transcribes subsequently all viral mRNAs with a decreasing efficiency. The first gene is the most transcribed, and the last the least transcribed. The viral phosphoprotein acts as a processivity factor. Capping is concomitant with initiation of mRNA transcription. Indeed, a GDP polyribonucleotidyl transferase (PRNTase) adds the cap structure when the nascent RNA chain length has reached few nucleotides. Ribose 2'-O methylation of viral mRNA cap precedes and facilitates subsequent guanine-N-7 methylation, both activities being carried by the viral polymerase. Polyadenylation of mRNAs occur by a stuttering mechanism at a slipery stop site present at the end viral genes. After finishing transcription of a mRNA, the polymerase can resume transcription of the downstream gene.</text>
</comment>
<comment type="function">
    <text evidence="2">RNA-directed RNA polymerase that catalyzes the replication of viral genomic RNA. The template is composed of the viral RNA tightly encapsidated by the nucleoprotein (N). The replicase mode is dependent on intracellular N protein concentration. In this mode, the polymerase replicates the whole viral genome without recognizing transcriptional signals, and the replicated genome is not caped or polyadenylated.</text>
</comment>
<comment type="catalytic activity">
    <reaction evidence="4">
        <text>RNA(n) + a ribonucleoside 5'-triphosphate = RNA(n+1) + diphosphate</text>
        <dbReference type="Rhea" id="RHEA:21248"/>
        <dbReference type="Rhea" id="RHEA-COMP:14527"/>
        <dbReference type="Rhea" id="RHEA-COMP:17342"/>
        <dbReference type="ChEBI" id="CHEBI:33019"/>
        <dbReference type="ChEBI" id="CHEBI:61557"/>
        <dbReference type="ChEBI" id="CHEBI:140395"/>
        <dbReference type="EC" id="2.7.7.48"/>
    </reaction>
</comment>
<comment type="catalytic activity">
    <reaction evidence="2">
        <text>a 5'-end (5'-triphosphoguanosine)-adenylyl-adenylyl-cytidylyl-adenosine in mRNA + 2 S-adenosyl-L-methionine = a 5'-end (N(7)-methyl 5'-triphosphoguanosine)-(2'-O-methyladenylyl)-adenylyl-cytidylyl-adenosine in mRNA + 2 S-adenosyl-L-homocysteine + H(+)</text>
        <dbReference type="Rhea" id="RHEA:65376"/>
        <dbReference type="Rhea" id="RHEA-COMP:16797"/>
        <dbReference type="Rhea" id="RHEA-COMP:16798"/>
        <dbReference type="ChEBI" id="CHEBI:15378"/>
        <dbReference type="ChEBI" id="CHEBI:57856"/>
        <dbReference type="ChEBI" id="CHEBI:59789"/>
        <dbReference type="ChEBI" id="CHEBI:156483"/>
        <dbReference type="ChEBI" id="CHEBI:156484"/>
        <dbReference type="EC" id="2.1.1.375"/>
    </reaction>
</comment>
<comment type="catalytic activity">
    <reaction evidence="2">
        <text>a 5'-end (5'-triphosphoguanosine)-adenylyl-adenylyl-cytidylyl-adenosine in mRNA + S-adenosyl-L-methionine = a 5'-end (5'-triphosphoguanosine)-(2'-O-methyladenylyl)-adenylyl-cytidylyl-adenosine in mRNA + S-adenosyl-L-homocysteine + H(+)</text>
        <dbReference type="Rhea" id="RHEA:65380"/>
        <dbReference type="Rhea" id="RHEA-COMP:16797"/>
        <dbReference type="Rhea" id="RHEA-COMP:16801"/>
        <dbReference type="ChEBI" id="CHEBI:15378"/>
        <dbReference type="ChEBI" id="CHEBI:57856"/>
        <dbReference type="ChEBI" id="CHEBI:59789"/>
        <dbReference type="ChEBI" id="CHEBI:156482"/>
        <dbReference type="ChEBI" id="CHEBI:156484"/>
    </reaction>
</comment>
<comment type="catalytic activity">
    <reaction evidence="3">
        <text>a 5'-end triphospho-adenylyl-adenylyl-cytidylyl-adenosine in mRNA + GDP + H(+) = a 5'-end (5'-triphosphoguanosine)-adenylyl-adenylyl-cytidylyl-adenosine in mRNA + diphosphate</text>
        <dbReference type="Rhea" id="RHEA:65436"/>
        <dbReference type="Rhea" id="RHEA-COMP:16797"/>
        <dbReference type="Rhea" id="RHEA-COMP:16799"/>
        <dbReference type="ChEBI" id="CHEBI:15378"/>
        <dbReference type="ChEBI" id="CHEBI:33019"/>
        <dbReference type="ChEBI" id="CHEBI:58189"/>
        <dbReference type="ChEBI" id="CHEBI:156484"/>
        <dbReference type="ChEBI" id="CHEBI:156503"/>
        <dbReference type="EC" id="2.7.7.88"/>
    </reaction>
</comment>
<comment type="catalytic activity">
    <reaction evidence="2">
        <text>a 5'-end (5'-triphosphoguanosine)-(2'-O-methyladenylyl)-adenylyl-cytidylyl-adenosine in mRNA + S-adenosyl-L-methionine = a 5'-end (N(7)-methyl 5'-triphosphoguanosine)-(2'-O-methyladenylyl)-adenylyl-cytidylyl-adenosine in mRNA + S-adenosyl-L-homocysteine</text>
        <dbReference type="Rhea" id="RHEA:65440"/>
        <dbReference type="Rhea" id="RHEA-COMP:16798"/>
        <dbReference type="Rhea" id="RHEA-COMP:16801"/>
        <dbReference type="ChEBI" id="CHEBI:57856"/>
        <dbReference type="ChEBI" id="CHEBI:59789"/>
        <dbReference type="ChEBI" id="CHEBI:156482"/>
        <dbReference type="ChEBI" id="CHEBI:156483"/>
    </reaction>
</comment>
<comment type="catalytic activity">
    <reaction evidence="3">
        <text>GTP + H2O = GDP + phosphate + H(+)</text>
        <dbReference type="Rhea" id="RHEA:19669"/>
        <dbReference type="ChEBI" id="CHEBI:15377"/>
        <dbReference type="ChEBI" id="CHEBI:15378"/>
        <dbReference type="ChEBI" id="CHEBI:37565"/>
        <dbReference type="ChEBI" id="CHEBI:43474"/>
        <dbReference type="ChEBI" id="CHEBI:58189"/>
    </reaction>
</comment>
<comment type="subcellular location">
    <subcellularLocation>
        <location>Host cytoplasm</location>
    </subcellularLocation>
    <subcellularLocation>
        <location evidence="1">Virion</location>
    </subcellularLocation>
</comment>
<organism>
    <name type="scientific">Reston ebolavirus (strain Philippines-96)</name>
    <name type="common">REBOV</name>
    <name type="synonym">Reston Ebola virus</name>
    <dbReference type="NCBI Taxonomy" id="129003"/>
    <lineage>
        <taxon>Viruses</taxon>
        <taxon>Riboviria</taxon>
        <taxon>Orthornavirae</taxon>
        <taxon>Negarnaviricota</taxon>
        <taxon>Haploviricotina</taxon>
        <taxon>Monjiviricetes</taxon>
        <taxon>Mononegavirales</taxon>
        <taxon>Filoviridae</taxon>
        <taxon>Orthoebolavirus</taxon>
        <taxon>Orthoebolavirus restonense</taxon>
        <taxon>Reston ebolavirus</taxon>
    </lineage>
</organism>
<keyword id="KW-0067">ATP-binding</keyword>
<keyword id="KW-1035">Host cytoplasm</keyword>
<keyword id="KW-0378">Hydrolase</keyword>
<keyword id="KW-0489">Methyltransferase</keyword>
<keyword id="KW-0506">mRNA capping</keyword>
<keyword id="KW-0507">mRNA processing</keyword>
<keyword id="KW-0511">Multifunctional enzyme</keyword>
<keyword id="KW-0547">Nucleotide-binding</keyword>
<keyword id="KW-0548">Nucleotidyltransferase</keyword>
<keyword id="KW-0696">RNA-directed RNA polymerase</keyword>
<keyword id="KW-0949">S-adenosyl-L-methionine</keyword>
<keyword id="KW-0808">Transferase</keyword>
<keyword id="KW-0693">Viral RNA replication</keyword>
<keyword id="KW-0946">Virion</keyword>
<protein>
    <recommendedName>
        <fullName>RNA-directed RNA polymerase L</fullName>
        <shortName>Protein L</shortName>
    </recommendedName>
    <alternativeName>
        <fullName>Large structural protein</fullName>
    </alternativeName>
    <alternativeName>
        <fullName>Replicase</fullName>
    </alternativeName>
    <alternativeName>
        <fullName>Transcriptase</fullName>
    </alternativeName>
    <domain>
        <recommendedName>
            <fullName>RNA-directed RNA polymerase</fullName>
            <ecNumber evidence="3">2.7.7.48</ecNumber>
        </recommendedName>
    </domain>
    <domain>
        <recommendedName>
            <fullName evidence="2">GTP phosphohydrolase</fullName>
            <ecNumber evidence="2">3.6.1.-</ecNumber>
        </recommendedName>
    </domain>
    <domain>
        <recommendedName>
            <fullName evidence="6">GDP polyribonucleotidyltransferase</fullName>
            <ecNumber evidence="2">2.7.7.88</ecNumber>
        </recommendedName>
        <alternativeName>
            <fullName evidence="6">PRNTase</fullName>
        </alternativeName>
    </domain>
    <domain>
        <recommendedName>
            <fullName evidence="6">mRNA cap methyltransferase</fullName>
            <ecNumber evidence="2">2.1.1.375</ecNumber>
        </recommendedName>
        <alternativeName>
            <fullName evidence="2">mRNA (guanine-N(7)-)-methyltransferase</fullName>
            <shortName evidence="2">G-N7-MTase</shortName>
        </alternativeName>
        <alternativeName>
            <fullName evidence="2">mRNA (nucleoside-2'-O-)-methyltransferase</fullName>
            <shortName evidence="2">N1-2'-O-MTase</shortName>
        </alternativeName>
    </domain>
</protein>